<protein>
    <recommendedName>
        <fullName>Olfactory receptor 4C12</fullName>
    </recommendedName>
    <alternativeName>
        <fullName>Olfactory receptor OR11-259</fullName>
    </alternativeName>
</protein>
<name>OR4CC_HUMAN</name>
<organism>
    <name type="scientific">Homo sapiens</name>
    <name type="common">Human</name>
    <dbReference type="NCBI Taxonomy" id="9606"/>
    <lineage>
        <taxon>Eukaryota</taxon>
        <taxon>Metazoa</taxon>
        <taxon>Chordata</taxon>
        <taxon>Craniata</taxon>
        <taxon>Vertebrata</taxon>
        <taxon>Euteleostomi</taxon>
        <taxon>Mammalia</taxon>
        <taxon>Eutheria</taxon>
        <taxon>Euarchontoglires</taxon>
        <taxon>Primates</taxon>
        <taxon>Haplorrhini</taxon>
        <taxon>Catarrhini</taxon>
        <taxon>Hominidae</taxon>
        <taxon>Homo</taxon>
    </lineage>
</organism>
<reference key="1">
    <citation type="journal article" date="2004" name="Genome Res.">
        <title>The status, quality, and expansion of the NIH full-length cDNA project: the Mammalian Gene Collection (MGC).</title>
        <authorList>
            <consortium name="The MGC Project Team"/>
        </authorList>
    </citation>
    <scope>NUCLEOTIDE SEQUENCE [LARGE SCALE MRNA]</scope>
    <scope>VARIANT LEU-283</scope>
</reference>
<reference key="2">
    <citation type="journal article" date="2002" name="Genomics">
        <title>DEFOG: a practical scheme for deciphering families of genes.</title>
        <authorList>
            <person name="Fuchs T."/>
            <person name="Malecova B."/>
            <person name="Linhart C."/>
            <person name="Sharan R."/>
            <person name="Khen M."/>
            <person name="Herwig R."/>
            <person name="Shmulevich D."/>
            <person name="Elkon R."/>
            <person name="Steinfath M."/>
            <person name="O'Brien J.K."/>
            <person name="Radelof U."/>
            <person name="Lehrach H."/>
            <person name="Lancet D."/>
            <person name="Shamir R."/>
        </authorList>
    </citation>
    <scope>NUCLEOTIDE SEQUENCE [GENOMIC DNA] OF 66-278</scope>
</reference>
<reference key="3">
    <citation type="journal article" date="2004" name="Proc. Natl. Acad. Sci. U.S.A.">
        <title>The human olfactory receptor gene family.</title>
        <authorList>
            <person name="Malnic B."/>
            <person name="Godfrey P.A."/>
            <person name="Buck L.B."/>
        </authorList>
    </citation>
    <scope>IDENTIFICATION</scope>
</reference>
<reference key="4">
    <citation type="journal article" date="2004" name="Proc. Natl. Acad. Sci. U.S.A.">
        <authorList>
            <person name="Malnic B."/>
            <person name="Godfrey P.A."/>
            <person name="Buck L.B."/>
        </authorList>
    </citation>
    <scope>ERRATUM OF PUBMED:14983052</scope>
</reference>
<dbReference type="EMBL" id="BC136850">
    <property type="protein sequence ID" value="AAI36851.1"/>
    <property type="molecule type" value="mRNA"/>
</dbReference>
<dbReference type="EMBL" id="BC136851">
    <property type="protein sequence ID" value="AAI36852.1"/>
    <property type="molecule type" value="mRNA"/>
</dbReference>
<dbReference type="EMBL" id="AF399576">
    <property type="protein sequence ID" value="AAK95061.1"/>
    <property type="molecule type" value="Genomic_DNA"/>
</dbReference>
<dbReference type="EMBL" id="BK004413">
    <property type="protein sequence ID" value="DAA04811.1"/>
    <property type="molecule type" value="Genomic_DNA"/>
</dbReference>
<dbReference type="CCDS" id="CCDS31496.1"/>
<dbReference type="RefSeq" id="NP_001005270.3">
    <property type="nucleotide sequence ID" value="NM_001005270.4"/>
</dbReference>
<dbReference type="SMR" id="Q96R67"/>
<dbReference type="FunCoup" id="Q96R67">
    <property type="interactions" value="458"/>
</dbReference>
<dbReference type="STRING" id="9606.ENSP00000334418"/>
<dbReference type="GlyCosmos" id="Q96R67">
    <property type="glycosylation" value="1 site, No reported glycans"/>
</dbReference>
<dbReference type="GlyGen" id="Q96R67">
    <property type="glycosylation" value="1 site"/>
</dbReference>
<dbReference type="iPTMnet" id="Q96R67"/>
<dbReference type="PhosphoSitePlus" id="Q96R67"/>
<dbReference type="BioMuta" id="OR4C12"/>
<dbReference type="DMDM" id="38372848"/>
<dbReference type="PaxDb" id="9606-ENSP00000334418"/>
<dbReference type="TopDownProteomics" id="Q96R67"/>
<dbReference type="Antibodypedia" id="58926">
    <property type="antibodies" value="89 antibodies from 20 providers"/>
</dbReference>
<dbReference type="DNASU" id="283093"/>
<dbReference type="Ensembl" id="ENST00000335238.4">
    <property type="protein sequence ID" value="ENSP00000334418.4"/>
    <property type="gene ID" value="ENSG00000221954.2"/>
</dbReference>
<dbReference type="Ensembl" id="ENST00000639310.1">
    <property type="protein sequence ID" value="ENSP00000491819.1"/>
    <property type="gene ID" value="ENSG00000284255.1"/>
</dbReference>
<dbReference type="GeneID" id="283093"/>
<dbReference type="KEGG" id="hsa:283093"/>
<dbReference type="MANE-Select" id="ENST00000335238.4">
    <property type="protein sequence ID" value="ENSP00000334418.4"/>
    <property type="RefSeq nucleotide sequence ID" value="NM_001005270.4"/>
    <property type="RefSeq protein sequence ID" value="NP_001005270.3"/>
</dbReference>
<dbReference type="UCSC" id="uc010ria.2">
    <property type="organism name" value="human"/>
</dbReference>
<dbReference type="AGR" id="HGNC:15168"/>
<dbReference type="CTD" id="283093"/>
<dbReference type="DisGeNET" id="283093"/>
<dbReference type="GeneCards" id="OR4C12"/>
<dbReference type="HGNC" id="HGNC:15168">
    <property type="gene designation" value="OR4C12"/>
</dbReference>
<dbReference type="HPA" id="ENSG00000221954">
    <property type="expression patterns" value="Not detected"/>
</dbReference>
<dbReference type="MalaCards" id="OR4C12"/>
<dbReference type="neXtProt" id="NX_Q96R67"/>
<dbReference type="OpenTargets" id="ENSG00000221954"/>
<dbReference type="PharmGKB" id="PA32254"/>
<dbReference type="VEuPathDB" id="HostDB:ENSG00000221954"/>
<dbReference type="eggNOG" id="ENOG502SHUM">
    <property type="taxonomic scope" value="Eukaryota"/>
</dbReference>
<dbReference type="GeneTree" id="ENSGT00940000162374"/>
<dbReference type="HOGENOM" id="CLU_012526_5_5_1"/>
<dbReference type="InParanoid" id="Q96R67"/>
<dbReference type="OMA" id="AYAEHIF"/>
<dbReference type="OrthoDB" id="10017003at2759"/>
<dbReference type="PAN-GO" id="Q96R67">
    <property type="GO annotations" value="2 GO annotations based on evolutionary models"/>
</dbReference>
<dbReference type="PhylomeDB" id="Q96R67"/>
<dbReference type="TreeFam" id="TF337350"/>
<dbReference type="PathwayCommons" id="Q96R67"/>
<dbReference type="Reactome" id="R-HSA-381753">
    <property type="pathway name" value="Olfactory Signaling Pathway"/>
</dbReference>
<dbReference type="Reactome" id="R-HSA-9752946">
    <property type="pathway name" value="Expression and translocation of olfactory receptors"/>
</dbReference>
<dbReference type="BioGRID-ORCS" id="283093">
    <property type="hits" value="9 hits in 695 CRISPR screens"/>
</dbReference>
<dbReference type="GeneWiki" id="OR4C12"/>
<dbReference type="GenomeRNAi" id="283093"/>
<dbReference type="Pharos" id="Q96R67">
    <property type="development level" value="Tdark"/>
</dbReference>
<dbReference type="PRO" id="PR:Q96R67"/>
<dbReference type="Proteomes" id="UP000005640">
    <property type="component" value="Chromosome 11"/>
</dbReference>
<dbReference type="RNAct" id="Q96R67">
    <property type="molecule type" value="protein"/>
</dbReference>
<dbReference type="GO" id="GO:0005886">
    <property type="term" value="C:plasma membrane"/>
    <property type="evidence" value="ECO:0000318"/>
    <property type="project" value="GO_Central"/>
</dbReference>
<dbReference type="GO" id="GO:0004930">
    <property type="term" value="F:G protein-coupled receptor activity"/>
    <property type="evidence" value="ECO:0007669"/>
    <property type="project" value="UniProtKB-KW"/>
</dbReference>
<dbReference type="GO" id="GO:0004984">
    <property type="term" value="F:olfactory receptor activity"/>
    <property type="evidence" value="ECO:0000318"/>
    <property type="project" value="GO_Central"/>
</dbReference>
<dbReference type="CDD" id="cd15939">
    <property type="entry name" value="7tmA_OR4A-like"/>
    <property type="match status" value="1"/>
</dbReference>
<dbReference type="FunFam" id="1.10.1220.70:FF:000001">
    <property type="entry name" value="Olfactory receptor"/>
    <property type="match status" value="1"/>
</dbReference>
<dbReference type="FunFam" id="1.20.1070.10:FF:000007">
    <property type="entry name" value="Olfactory receptor"/>
    <property type="match status" value="1"/>
</dbReference>
<dbReference type="Gene3D" id="1.20.1070.10">
    <property type="entry name" value="Rhodopsin 7-helix transmembrane proteins"/>
    <property type="match status" value="1"/>
</dbReference>
<dbReference type="InterPro" id="IPR000276">
    <property type="entry name" value="GPCR_Rhodpsn"/>
</dbReference>
<dbReference type="InterPro" id="IPR017452">
    <property type="entry name" value="GPCR_Rhodpsn_7TM"/>
</dbReference>
<dbReference type="InterPro" id="IPR000725">
    <property type="entry name" value="Olfact_rcpt"/>
</dbReference>
<dbReference type="InterPro" id="IPR050427">
    <property type="entry name" value="Olfactory_Receptors"/>
</dbReference>
<dbReference type="PANTHER" id="PTHR48002">
    <property type="entry name" value="OLFACTORY RECEPTOR"/>
    <property type="match status" value="1"/>
</dbReference>
<dbReference type="Pfam" id="PF13853">
    <property type="entry name" value="7tm_4"/>
    <property type="match status" value="1"/>
</dbReference>
<dbReference type="PRINTS" id="PR00237">
    <property type="entry name" value="GPCRRHODOPSN"/>
</dbReference>
<dbReference type="PRINTS" id="PR00245">
    <property type="entry name" value="OLFACTORYR"/>
</dbReference>
<dbReference type="SUPFAM" id="SSF81321">
    <property type="entry name" value="Family A G protein-coupled receptor-like"/>
    <property type="match status" value="1"/>
</dbReference>
<dbReference type="PROSITE" id="PS50262">
    <property type="entry name" value="G_PROTEIN_RECEP_F1_2"/>
    <property type="match status" value="1"/>
</dbReference>
<feature type="chain" id="PRO_0000150533" description="Olfactory receptor 4C12">
    <location>
        <begin position="1"/>
        <end position="309"/>
    </location>
</feature>
<feature type="topological domain" description="Extracellular" evidence="1">
    <location>
        <begin position="1"/>
        <end position="23"/>
    </location>
</feature>
<feature type="transmembrane region" description="Helical; Name=1" evidence="1">
    <location>
        <begin position="24"/>
        <end position="47"/>
    </location>
</feature>
<feature type="topological domain" description="Cytoplasmic" evidence="1">
    <location>
        <begin position="48"/>
        <end position="55"/>
    </location>
</feature>
<feature type="transmembrane region" description="Helical; Name=2" evidence="1">
    <location>
        <begin position="56"/>
        <end position="77"/>
    </location>
</feature>
<feature type="topological domain" description="Extracellular" evidence="1">
    <location>
        <begin position="78"/>
        <end position="98"/>
    </location>
</feature>
<feature type="transmembrane region" description="Helical; Name=3" evidence="1">
    <location>
        <begin position="99"/>
        <end position="118"/>
    </location>
</feature>
<feature type="topological domain" description="Cytoplasmic" evidence="1">
    <location>
        <begin position="119"/>
        <end position="137"/>
    </location>
</feature>
<feature type="transmembrane region" description="Helical; Name=4" evidence="1">
    <location>
        <begin position="138"/>
        <end position="156"/>
    </location>
</feature>
<feature type="topological domain" description="Extracellular" evidence="1">
    <location>
        <begin position="157"/>
        <end position="193"/>
    </location>
</feature>
<feature type="transmembrane region" description="Helical; Name=5" evidence="1">
    <location>
        <begin position="194"/>
        <end position="217"/>
    </location>
</feature>
<feature type="topological domain" description="Cytoplasmic" evidence="1">
    <location>
        <begin position="218"/>
        <end position="233"/>
    </location>
</feature>
<feature type="transmembrane region" description="Helical; Name=6" evidence="1">
    <location>
        <begin position="234"/>
        <end position="256"/>
    </location>
</feature>
<feature type="topological domain" description="Extracellular" evidence="1">
    <location>
        <begin position="257"/>
        <end position="267"/>
    </location>
</feature>
<feature type="transmembrane region" description="Helical; Name=7" evidence="1">
    <location>
        <begin position="268"/>
        <end position="287"/>
    </location>
</feature>
<feature type="topological domain" description="Cytoplasmic" evidence="1">
    <location>
        <begin position="288"/>
        <end position="309"/>
    </location>
</feature>
<feature type="glycosylation site" description="N-linked (GlcNAc...) asparagine" evidence="1">
    <location>
        <position position="6"/>
    </location>
</feature>
<feature type="disulfide bond" evidence="2">
    <location>
        <begin position="95"/>
        <end position="187"/>
    </location>
</feature>
<feature type="sequence variant" id="VAR_034192" description="In dbSNP:rs4598671." evidence="3">
    <original>V</original>
    <variation>L</variation>
    <location>
        <position position="283"/>
    </location>
</feature>
<proteinExistence type="evidence at transcript level"/>
<keyword id="KW-1003">Cell membrane</keyword>
<keyword id="KW-1015">Disulfide bond</keyword>
<keyword id="KW-0297">G-protein coupled receptor</keyword>
<keyword id="KW-0325">Glycoprotein</keyword>
<keyword id="KW-0472">Membrane</keyword>
<keyword id="KW-0552">Olfaction</keyword>
<keyword id="KW-0675">Receptor</keyword>
<keyword id="KW-1185">Reference proteome</keyword>
<keyword id="KW-0716">Sensory transduction</keyword>
<keyword id="KW-0807">Transducer</keyword>
<keyword id="KW-0812">Transmembrane</keyword>
<keyword id="KW-1133">Transmembrane helix</keyword>
<evidence type="ECO:0000255" key="1"/>
<evidence type="ECO:0000255" key="2">
    <source>
        <dbReference type="PROSITE-ProRule" id="PRU00521"/>
    </source>
</evidence>
<evidence type="ECO:0000269" key="3">
    <source>
    </source>
</evidence>
<evidence type="ECO:0000305" key="4"/>
<gene>
    <name type="primary">OR4C12</name>
</gene>
<accession>Q96R67</accession>
<accession>B2RNF0</accession>
<accession>Q6IF49</accession>
<comment type="function">
    <text evidence="4">Odorant receptor.</text>
</comment>
<comment type="subcellular location">
    <subcellularLocation>
        <location>Cell membrane</location>
        <topology>Multi-pass membrane protein</topology>
    </subcellularLocation>
</comment>
<comment type="similarity">
    <text evidence="2">Belongs to the G-protein coupled receptor 1 family.</text>
</comment>
<comment type="online information" name="Human Olfactory Receptor Data Exploratorium (HORDE)">
    <link uri="http://genome.weizmann.ac.il/horde/card/index/symbol:OR4C12"/>
</comment>
<sequence>MEKKKNVTEFILIGLTQNPIMEKVTFVVFLVLYMITLSGNLLIVVTITTSQALSSPMYFFLTHLSLIDTVYSSSSAPKLIVDSFQEKKIISFNGCMAQAYAEHIFGATEIILLTVMACDCYVAICKPLNYTTIMSHSLCILLVAVAWVGGFLHATIQILFTVWLPFCGPNVIGHFMCDLYPLLKLVCIDTHTLGLFVAVNSGFICLLNFLILVVSYVIILRSLKNNSLEGRCKALSTCISHIIVVVLFFVPCIFVYLRSVTTLPIDKAVAVFYTMVVPMLNPVVYTLRNAEVKSAIRKLWRKKVTSDND</sequence>